<protein>
    <recommendedName>
        <fullName evidence="1">Cobalt-precorrin-5B C(1)-methyltransferase</fullName>
        <ecNumber evidence="1">2.1.1.195</ecNumber>
    </recommendedName>
    <alternativeName>
        <fullName evidence="1">Cobalt-precorrin-6A synthase</fullName>
    </alternativeName>
</protein>
<accession>A8MG25</accession>
<organism>
    <name type="scientific">Alkaliphilus oremlandii (strain OhILAs)</name>
    <name type="common">Clostridium oremlandii (strain OhILAs)</name>
    <dbReference type="NCBI Taxonomy" id="350688"/>
    <lineage>
        <taxon>Bacteria</taxon>
        <taxon>Bacillati</taxon>
        <taxon>Bacillota</taxon>
        <taxon>Clostridia</taxon>
        <taxon>Peptostreptococcales</taxon>
        <taxon>Natronincolaceae</taxon>
        <taxon>Alkaliphilus</taxon>
    </lineage>
</organism>
<comment type="function">
    <text evidence="1">Catalyzes the methylation of C-1 in cobalt-precorrin-5B to form cobalt-precorrin-6A.</text>
</comment>
<comment type="catalytic activity">
    <reaction evidence="1">
        <text>Co-precorrin-5B + S-adenosyl-L-methionine = Co-precorrin-6A + S-adenosyl-L-homocysteine</text>
        <dbReference type="Rhea" id="RHEA:26285"/>
        <dbReference type="ChEBI" id="CHEBI:57856"/>
        <dbReference type="ChEBI" id="CHEBI:59789"/>
        <dbReference type="ChEBI" id="CHEBI:60063"/>
        <dbReference type="ChEBI" id="CHEBI:60064"/>
        <dbReference type="EC" id="2.1.1.195"/>
    </reaction>
</comment>
<comment type="pathway">
    <text evidence="1">Cofactor biosynthesis; adenosylcobalamin biosynthesis; cob(II)yrinate a,c-diamide from sirohydrochlorin (anaerobic route): step 6/10.</text>
</comment>
<comment type="similarity">
    <text evidence="1">Belongs to the CbiD family.</text>
</comment>
<gene>
    <name evidence="1" type="primary">cbiD</name>
    <name type="ordered locus">Clos_1016</name>
</gene>
<evidence type="ECO:0000255" key="1">
    <source>
        <dbReference type="HAMAP-Rule" id="MF_00787"/>
    </source>
</evidence>
<proteinExistence type="inferred from homology"/>
<keyword id="KW-0169">Cobalamin biosynthesis</keyword>
<keyword id="KW-0489">Methyltransferase</keyword>
<keyword id="KW-1185">Reference proteome</keyword>
<keyword id="KW-0949">S-adenosyl-L-methionine</keyword>
<keyword id="KW-0808">Transferase</keyword>
<dbReference type="EC" id="2.1.1.195" evidence="1"/>
<dbReference type="EMBL" id="CP000853">
    <property type="protein sequence ID" value="ABW18563.1"/>
    <property type="molecule type" value="Genomic_DNA"/>
</dbReference>
<dbReference type="RefSeq" id="WP_012158875.1">
    <property type="nucleotide sequence ID" value="NC_009922.1"/>
</dbReference>
<dbReference type="SMR" id="A8MG25"/>
<dbReference type="STRING" id="350688.Clos_1016"/>
<dbReference type="KEGG" id="aoe:Clos_1016"/>
<dbReference type="eggNOG" id="COG1903">
    <property type="taxonomic scope" value="Bacteria"/>
</dbReference>
<dbReference type="HOGENOM" id="CLU_041273_1_0_9"/>
<dbReference type="OrthoDB" id="6439987at2"/>
<dbReference type="UniPathway" id="UPA00148">
    <property type="reaction ID" value="UER00227"/>
</dbReference>
<dbReference type="Proteomes" id="UP000000269">
    <property type="component" value="Chromosome"/>
</dbReference>
<dbReference type="GO" id="GO:0043780">
    <property type="term" value="F:cobalt-precorrin-5B C1-methyltransferase activity"/>
    <property type="evidence" value="ECO:0007669"/>
    <property type="project" value="RHEA"/>
</dbReference>
<dbReference type="GO" id="GO:0019251">
    <property type="term" value="P:anaerobic cobalamin biosynthetic process"/>
    <property type="evidence" value="ECO:0007669"/>
    <property type="project" value="UniProtKB-UniRule"/>
</dbReference>
<dbReference type="GO" id="GO:0032259">
    <property type="term" value="P:methylation"/>
    <property type="evidence" value="ECO:0007669"/>
    <property type="project" value="UniProtKB-KW"/>
</dbReference>
<dbReference type="Gene3D" id="3.30.2110.10">
    <property type="entry name" value="CbiD-like"/>
    <property type="match status" value="1"/>
</dbReference>
<dbReference type="HAMAP" id="MF_00787">
    <property type="entry name" value="CbiD"/>
    <property type="match status" value="1"/>
</dbReference>
<dbReference type="InterPro" id="IPR002748">
    <property type="entry name" value="CbiD"/>
</dbReference>
<dbReference type="InterPro" id="IPR036074">
    <property type="entry name" value="CbiD_sf"/>
</dbReference>
<dbReference type="NCBIfam" id="TIGR00312">
    <property type="entry name" value="cbiD"/>
    <property type="match status" value="1"/>
</dbReference>
<dbReference type="PANTHER" id="PTHR35863">
    <property type="entry name" value="COBALT-PRECORRIN-5B C(1)-METHYLTRANSFERASE"/>
    <property type="match status" value="1"/>
</dbReference>
<dbReference type="PANTHER" id="PTHR35863:SF1">
    <property type="entry name" value="COBALT-PRECORRIN-5B C(1)-METHYLTRANSFERASE"/>
    <property type="match status" value="1"/>
</dbReference>
<dbReference type="Pfam" id="PF01888">
    <property type="entry name" value="CbiD"/>
    <property type="match status" value="1"/>
</dbReference>
<dbReference type="PIRSF" id="PIRSF026782">
    <property type="entry name" value="CbiD"/>
    <property type="match status" value="1"/>
</dbReference>
<dbReference type="SUPFAM" id="SSF111342">
    <property type="entry name" value="CbiD-like"/>
    <property type="match status" value="1"/>
</dbReference>
<sequence>MLDLYVIKEGKRLRCGYTTGSCAAAAAKAAAIMLETGKVLQFVEIDTPANIPLKLEVHNPSIDPEKASCAIVKDAGDDPDNTDGIEIYAEVRKRQDGQVHIHGGTGIGRIVRKGLFGTVGQAAINPVPLQMIEKEIRAVSDKGYDVTIYAPQGEVIAKKTFNANIGIEGGISIIGTKGIVYPMSEEALIKTIYMEMDMVEQKHGLSNIILVPGNYGEKISDTLGLSEARVKISNYIGDSLLYAYNKGFQSMTLIGHIGKFSKLSIGVFNTHSKVCDGRMEAFIYYLALMGAPRQLIEEVNGAVTAEEGLHICIDAGYGEVIKKMEQGAEQKIRKYIKDENYPVKVIIYSMERGVHMG</sequence>
<name>CBID_ALKOO</name>
<feature type="chain" id="PRO_1000062245" description="Cobalt-precorrin-5B C(1)-methyltransferase">
    <location>
        <begin position="1"/>
        <end position="357"/>
    </location>
</feature>
<reference key="1">
    <citation type="submission" date="2007-10" db="EMBL/GenBank/DDBJ databases">
        <title>Complete genome of Alkaliphilus oremlandii OhILAs.</title>
        <authorList>
            <person name="Copeland A."/>
            <person name="Lucas S."/>
            <person name="Lapidus A."/>
            <person name="Barry K."/>
            <person name="Detter J.C."/>
            <person name="Glavina del Rio T."/>
            <person name="Hammon N."/>
            <person name="Israni S."/>
            <person name="Dalin E."/>
            <person name="Tice H."/>
            <person name="Pitluck S."/>
            <person name="Chain P."/>
            <person name="Malfatti S."/>
            <person name="Shin M."/>
            <person name="Vergez L."/>
            <person name="Schmutz J."/>
            <person name="Larimer F."/>
            <person name="Land M."/>
            <person name="Hauser L."/>
            <person name="Kyrpides N."/>
            <person name="Mikhailova N."/>
            <person name="Stolz J.F."/>
            <person name="Dawson A."/>
            <person name="Fisher E."/>
            <person name="Crable B."/>
            <person name="Perera E."/>
            <person name="Lisak J."/>
            <person name="Ranganathan M."/>
            <person name="Basu P."/>
            <person name="Richardson P."/>
        </authorList>
    </citation>
    <scope>NUCLEOTIDE SEQUENCE [LARGE SCALE GENOMIC DNA]</scope>
    <source>
        <strain>OhILAs</strain>
    </source>
</reference>